<organism>
    <name type="scientific">Mus musculus</name>
    <name type="common">Mouse</name>
    <dbReference type="NCBI Taxonomy" id="10090"/>
    <lineage>
        <taxon>Eukaryota</taxon>
        <taxon>Metazoa</taxon>
        <taxon>Chordata</taxon>
        <taxon>Craniata</taxon>
        <taxon>Vertebrata</taxon>
        <taxon>Euteleostomi</taxon>
        <taxon>Mammalia</taxon>
        <taxon>Eutheria</taxon>
        <taxon>Euarchontoglires</taxon>
        <taxon>Glires</taxon>
        <taxon>Rodentia</taxon>
        <taxon>Myomorpha</taxon>
        <taxon>Muroidea</taxon>
        <taxon>Muridae</taxon>
        <taxon>Murinae</taxon>
        <taxon>Mus</taxon>
        <taxon>Mus</taxon>
    </lineage>
</organism>
<protein>
    <recommendedName>
        <fullName evidence="11">Cytotoxic granule associated RNA binding protein TIA1</fullName>
    </recommendedName>
    <alternativeName>
        <fullName evidence="10">Nucleolysin TIA-1</fullName>
    </alternativeName>
    <alternativeName>
        <fullName>RNA-binding protein TIA-1</fullName>
    </alternativeName>
    <alternativeName>
        <fullName>T-cell-restricted intracellular antigen-1</fullName>
        <shortName>TIA-1</shortName>
    </alternativeName>
</protein>
<keyword id="KW-0002">3D-structure</keyword>
<keyword id="KW-0007">Acetylation</keyword>
<keyword id="KW-0053">Apoptosis</keyword>
<keyword id="KW-0963">Cytoplasm</keyword>
<keyword id="KW-0507">mRNA processing</keyword>
<keyword id="KW-0508">mRNA splicing</keyword>
<keyword id="KW-0539">Nucleus</keyword>
<keyword id="KW-1185">Reference proteome</keyword>
<keyword id="KW-0677">Repeat</keyword>
<keyword id="KW-0694">RNA-binding</keyword>
<name>TIA1_MOUSE</name>
<gene>
    <name type="primary">Tia1</name>
    <name type="synonym">Tia</name>
</gene>
<dbReference type="EMBL" id="U00689">
    <property type="protein sequence ID" value="AAA03711.1"/>
    <property type="molecule type" value="mRNA"/>
</dbReference>
<dbReference type="EMBL" id="U55862">
    <property type="protein sequence ID" value="AAC52871.1"/>
    <property type="molecule type" value="mRNA"/>
</dbReference>
<dbReference type="CCDS" id="CCDS20312.1"/>
<dbReference type="PIR" id="S72435">
    <property type="entry name" value="S72435"/>
</dbReference>
<dbReference type="RefSeq" id="NP_035715.1">
    <property type="nucleotide sequence ID" value="NM_011585.4"/>
</dbReference>
<dbReference type="PDB" id="2DGO">
    <property type="method" value="NMR"/>
    <property type="chains" value="A=87-199"/>
</dbReference>
<dbReference type="PDB" id="2RNE">
    <property type="method" value="NMR"/>
    <property type="chains" value="A=87-199"/>
</dbReference>
<dbReference type="PDBsum" id="2DGO"/>
<dbReference type="PDBsum" id="2RNE"/>
<dbReference type="SMR" id="P52912"/>
<dbReference type="BioGRID" id="204190">
    <property type="interactions" value="190"/>
</dbReference>
<dbReference type="CORUM" id="P52912"/>
<dbReference type="FunCoup" id="P52912">
    <property type="interactions" value="3991"/>
</dbReference>
<dbReference type="IntAct" id="P52912">
    <property type="interactions" value="1"/>
</dbReference>
<dbReference type="MINT" id="P52912"/>
<dbReference type="STRING" id="10090.ENSMUSP00000093425"/>
<dbReference type="iPTMnet" id="P52912"/>
<dbReference type="PhosphoSitePlus" id="P52912"/>
<dbReference type="PaxDb" id="10090-ENSMUSP00000093425"/>
<dbReference type="ProteomicsDB" id="262777"/>
<dbReference type="Pumba" id="P52912"/>
<dbReference type="Antibodypedia" id="16302">
    <property type="antibodies" value="603 antibodies from 42 providers"/>
</dbReference>
<dbReference type="DNASU" id="21841"/>
<dbReference type="Ensembl" id="ENSMUST00000095753.9">
    <property type="protein sequence ID" value="ENSMUSP00000093425.3"/>
    <property type="gene ID" value="ENSMUSG00000071337.12"/>
</dbReference>
<dbReference type="GeneID" id="21841"/>
<dbReference type="KEGG" id="mmu:21841"/>
<dbReference type="UCSC" id="uc009crp.2">
    <property type="organism name" value="mouse"/>
</dbReference>
<dbReference type="AGR" id="MGI:107914"/>
<dbReference type="CTD" id="7072"/>
<dbReference type="MGI" id="MGI:107914">
    <property type="gene designation" value="Tia1"/>
</dbReference>
<dbReference type="VEuPathDB" id="HostDB:ENSMUSG00000071337"/>
<dbReference type="eggNOG" id="KOG0148">
    <property type="taxonomic scope" value="Eukaryota"/>
</dbReference>
<dbReference type="GeneTree" id="ENSGT00940000154962"/>
<dbReference type="InParanoid" id="P52912"/>
<dbReference type="OMA" id="VRIFKMQ"/>
<dbReference type="OrthoDB" id="439808at2759"/>
<dbReference type="PhylomeDB" id="P52912"/>
<dbReference type="TreeFam" id="TF312915"/>
<dbReference type="BioGRID-ORCS" id="21841">
    <property type="hits" value="4 hits in 79 CRISPR screens"/>
</dbReference>
<dbReference type="CD-CODE" id="B61E46D6">
    <property type="entry name" value="Synthetic Condensate 000104"/>
</dbReference>
<dbReference type="CD-CODE" id="D12E4DB9">
    <property type="entry name" value="Stress granule"/>
</dbReference>
<dbReference type="ChiTaRS" id="Tia1">
    <property type="organism name" value="mouse"/>
</dbReference>
<dbReference type="EvolutionaryTrace" id="P52912"/>
<dbReference type="PRO" id="PR:P52912"/>
<dbReference type="Proteomes" id="UP000000589">
    <property type="component" value="Chromosome 6"/>
</dbReference>
<dbReference type="RNAct" id="P52912">
    <property type="molecule type" value="protein"/>
</dbReference>
<dbReference type="Bgee" id="ENSMUSG00000071337">
    <property type="expression patterns" value="Expressed in rostral migratory stream and 264 other cell types or tissues"/>
</dbReference>
<dbReference type="ExpressionAtlas" id="P52912">
    <property type="expression patterns" value="baseline and differential"/>
</dbReference>
<dbReference type="GO" id="GO:0005737">
    <property type="term" value="C:cytoplasm"/>
    <property type="evidence" value="ECO:0000314"/>
    <property type="project" value="UniProtKB"/>
</dbReference>
<dbReference type="GO" id="GO:0010494">
    <property type="term" value="C:cytoplasmic stress granule"/>
    <property type="evidence" value="ECO:0000314"/>
    <property type="project" value="UniProtKB"/>
</dbReference>
<dbReference type="GO" id="GO:0005829">
    <property type="term" value="C:cytosol"/>
    <property type="evidence" value="ECO:0007669"/>
    <property type="project" value="Ensembl"/>
</dbReference>
<dbReference type="GO" id="GO:0097165">
    <property type="term" value="C:nuclear stress granule"/>
    <property type="evidence" value="ECO:0000314"/>
    <property type="project" value="MGI"/>
</dbReference>
<dbReference type="GO" id="GO:0005654">
    <property type="term" value="C:nucleoplasm"/>
    <property type="evidence" value="ECO:0007669"/>
    <property type="project" value="Ensembl"/>
</dbReference>
<dbReference type="GO" id="GO:0005634">
    <property type="term" value="C:nucleus"/>
    <property type="evidence" value="ECO:0000314"/>
    <property type="project" value="UniProtKB"/>
</dbReference>
<dbReference type="GO" id="GO:1990904">
    <property type="term" value="C:ribonucleoprotein complex"/>
    <property type="evidence" value="ECO:0007669"/>
    <property type="project" value="Ensembl"/>
</dbReference>
<dbReference type="GO" id="GO:0035925">
    <property type="term" value="F:mRNA 3'-UTR AU-rich region binding"/>
    <property type="evidence" value="ECO:0000314"/>
    <property type="project" value="MGI"/>
</dbReference>
<dbReference type="GO" id="GO:0003730">
    <property type="term" value="F:mRNA 3'-UTR binding"/>
    <property type="evidence" value="ECO:0000314"/>
    <property type="project" value="UniProtKB"/>
</dbReference>
<dbReference type="GO" id="GO:0006915">
    <property type="term" value="P:apoptotic process"/>
    <property type="evidence" value="ECO:0007669"/>
    <property type="project" value="UniProtKB-KW"/>
</dbReference>
<dbReference type="GO" id="GO:0006397">
    <property type="term" value="P:mRNA processing"/>
    <property type="evidence" value="ECO:0007669"/>
    <property type="project" value="UniProtKB-KW"/>
</dbReference>
<dbReference type="GO" id="GO:0001818">
    <property type="term" value="P:negative regulation of cytokine production"/>
    <property type="evidence" value="ECO:0000315"/>
    <property type="project" value="MGI"/>
</dbReference>
<dbReference type="GO" id="GO:0017148">
    <property type="term" value="P:negative regulation of translation"/>
    <property type="evidence" value="ECO:0000314"/>
    <property type="project" value="UniProtKB"/>
</dbReference>
<dbReference type="GO" id="GO:1904037">
    <property type="term" value="P:positive regulation of epithelial cell apoptotic process"/>
    <property type="evidence" value="ECO:0007669"/>
    <property type="project" value="Ensembl"/>
</dbReference>
<dbReference type="GO" id="GO:1903608">
    <property type="term" value="P:protein localization to cytoplasmic stress granule"/>
    <property type="evidence" value="ECO:0007669"/>
    <property type="project" value="Ensembl"/>
</dbReference>
<dbReference type="GO" id="GO:0000381">
    <property type="term" value="P:regulation of alternative mRNA splicing, via spliceosome"/>
    <property type="evidence" value="ECO:0000314"/>
    <property type="project" value="UniProtKB"/>
</dbReference>
<dbReference type="GO" id="GO:0008380">
    <property type="term" value="P:RNA splicing"/>
    <property type="evidence" value="ECO:0007669"/>
    <property type="project" value="UniProtKB-KW"/>
</dbReference>
<dbReference type="GO" id="GO:0034063">
    <property type="term" value="P:stress granule assembly"/>
    <property type="evidence" value="ECO:0000250"/>
    <property type="project" value="UniProtKB"/>
</dbReference>
<dbReference type="CDD" id="cd12615">
    <property type="entry name" value="RRM1_TIA1"/>
    <property type="match status" value="1"/>
</dbReference>
<dbReference type="CDD" id="cd12618">
    <property type="entry name" value="RRM2_TIA1"/>
    <property type="match status" value="1"/>
</dbReference>
<dbReference type="CDD" id="cd12620">
    <property type="entry name" value="RRM3_TIAR"/>
    <property type="match status" value="1"/>
</dbReference>
<dbReference type="FunFam" id="3.30.70.330:FF:000951">
    <property type="entry name" value="nucleolysin TIA-1 isoform X7"/>
    <property type="match status" value="1"/>
</dbReference>
<dbReference type="FunFam" id="3.30.70.330:FF:000038">
    <property type="entry name" value="Nucleolysin tiar isoform 1"/>
    <property type="match status" value="1"/>
</dbReference>
<dbReference type="FunFam" id="3.30.70.330:FF:000045">
    <property type="entry name" value="Nucleolysin tiar isoform 1"/>
    <property type="match status" value="1"/>
</dbReference>
<dbReference type="Gene3D" id="3.30.70.330">
    <property type="match status" value="3"/>
</dbReference>
<dbReference type="IDEAL" id="IID50284"/>
<dbReference type="InterPro" id="IPR012677">
    <property type="entry name" value="Nucleotide-bd_a/b_plait_sf"/>
</dbReference>
<dbReference type="InterPro" id="IPR035979">
    <property type="entry name" value="RBD_domain_sf"/>
</dbReference>
<dbReference type="InterPro" id="IPR000504">
    <property type="entry name" value="RRM_dom"/>
</dbReference>
<dbReference type="InterPro" id="IPR003954">
    <property type="entry name" value="RRM_dom_euk"/>
</dbReference>
<dbReference type="InterPro" id="IPR034827">
    <property type="entry name" value="TIA-1_RRM1"/>
</dbReference>
<dbReference type="InterPro" id="IPR034830">
    <property type="entry name" value="TIA1_RRM2"/>
</dbReference>
<dbReference type="InterPro" id="IPR034496">
    <property type="entry name" value="TIAR_RRM3"/>
</dbReference>
<dbReference type="PANTHER" id="PTHR10352">
    <property type="entry name" value="EUKARYOTIC TRANSLATION INITIATION FACTOR 3 SUBUNIT G"/>
    <property type="match status" value="1"/>
</dbReference>
<dbReference type="Pfam" id="PF00076">
    <property type="entry name" value="RRM_1"/>
    <property type="match status" value="3"/>
</dbReference>
<dbReference type="SMART" id="SM00360">
    <property type="entry name" value="RRM"/>
    <property type="match status" value="3"/>
</dbReference>
<dbReference type="SMART" id="SM00361">
    <property type="entry name" value="RRM_1"/>
    <property type="match status" value="3"/>
</dbReference>
<dbReference type="SUPFAM" id="SSF54928">
    <property type="entry name" value="RNA-binding domain, RBD"/>
    <property type="match status" value="2"/>
</dbReference>
<dbReference type="PROSITE" id="PS50102">
    <property type="entry name" value="RRM"/>
    <property type="match status" value="3"/>
</dbReference>
<comment type="function">
    <text evidence="1 4 5 6 7 9">RNA-binding protein involved in the regulation of alternative pre-RNA splicing and mRNA translation by binding to uridine-rich (U-rich) RNA sequences (PubMed:10938105, PubMed:16227602). Binds to U-rich sequences immediately downstream from a 5' splice sites in a uridine-rich small nuclear ribonucleoprotein (U snRNP)-dependent fashion, thereby modulating alternative pre-RNA splicing (PubMed:10938105). Preferably binds to the U-rich IAS1 sequence in a U1 snRNP-dependent manner; this binding is optimal if a 5' splice site is adjacent to IAS1 (PubMed:10938105). Activates the use of heterologous 5' splice sites; the activation depends on the intron sequence downstream from the 5' splice site, with a preference for a downstream U-rich sequence (PubMed:10938105). By interacting with SNRPC/U1-C, promotes recruitment and binding of spliceosomal U1 snRNP to 5' splice sites followed by U-rich sequences, thereby facilitating atypical 5' splice site recognition by U1 snRNP (By similarity). Activates splicing of alternative exons with weak 5' splice sites followed by a U-rich stretch on its own pre-mRNA and on TIAR mRNA (PubMed:11514562). Acts as a modulator of alternative splicing for the apoptotic FAS receptor, thereby promoting apoptosis (By similarity). Binds to the 5' splice site region of FAS intron 5 to promote accumulation of transcripts that include exon 6 at the expense of transcripts in which exon 6 is skipped, thereby leading to the transcription of a membrane-bound apoptotic FAS receptor, which promotes apoptosis (By similarity). Binds to a conserved AU-rich cis element in COL2A1 intron 2 and modulates alternative splicing of COL2A1 exon 2 (By similarity). Also binds to the equivalent AT-rich element in COL2A1 genomic DNA, and may thereby be involved in the regulation of transcription (By similarity). Involved in the repression of mRNA translation by binding to AU-rich elements (AREs) located in mRNA 3' untranslated regions (3' UTRs), including target ARE-bearing mRNAs encoding TNF and PTGS2 (PubMed:10921895, PubMed:16227602). Also participates in the cellular response to environmental stress, by acting downstream of the stress-induced phosphorylation of EIF2S1/EIF2A to promote the recruitment of untranslated mRNAs to cytoplasmic stress granules (SGs), leading to stress-induced translational arrest (By similarity). Formation and recruitment to SGs is regulated by Zn(2+) (PubMed:29298433). Possesses nucleolytic activity against cytotoxic lymphocyte target cells (By similarity).</text>
</comment>
<comment type="subunit">
    <text evidence="1 9">Homooligomer; homooligomerization is induced by Zn(2+) (PubMed:29298433). Interacts with FASTK; the interactions leads to its phosphorylation (By similarity). Interacts (via RRM1 and the C-terminal glutamine-rich (Q) sequence) with SNRPC/U1-C (via N-terminus); thereby facilitating spliceosomal U1 snRNP recruitment to 5' splice sites (By similarity).</text>
</comment>
<comment type="subcellular location">
    <subcellularLocation>
        <location evidence="8">Nucleus</location>
    </subcellularLocation>
    <subcellularLocation>
        <location evidence="8">Cytoplasm</location>
    </subcellularLocation>
    <subcellularLocation>
        <location evidence="9">Cytoplasm</location>
        <location evidence="9">Stress granule</location>
    </subcellularLocation>
    <text evidence="9">Accumulates in cytoplasmic stress granules (SG) following cellular damage (PubMed:29298433). Recruitment to SG is induced by Zn(2+) (PubMed:29298433).</text>
</comment>
<comment type="domain">
    <text evidence="1">The RNA recognition motif domains RRM 2 and RRM 3 are necessary and sufficient for binding to uridine-rich target pre-mRNA.</text>
</comment>
<comment type="domain">
    <text evidence="1">The RRM 1 and RRM 2 domains are required for the localization to stress granules (SGs) and for the recruitment of TIAR1 and poly(A) RNA to SGs in response to stress.</text>
</comment>
<comment type="domain">
    <text evidence="8">The RRM2 domain and the C-terminal residues 287-340 contribute to nuclear localization.</text>
</comment>
<comment type="domain">
    <text evidence="8">The RRM3 domain mediates nuclear export.</text>
</comment>
<comment type="domain">
    <text evidence="1">The C-terminal glutamine-rich (Q) sequence in combination with the RRM 1 domain is required for the interaction with SNRPC/U1-C and to facilitate recruitment of spliceosomal U1 snRNP to 5' splice sites.</text>
</comment>
<comment type="PTM">
    <text evidence="1">Phosphorylatedby FASTK; phosphorylation occurs after FAS ligation in FAS-mediated apoptosis and before DNA fragmentation.</text>
</comment>
<comment type="disruption phenotype">
    <text evidence="4">50% lethality between embryonic day 16.5 and 3 weeks of age (PubMed:10921895). Surviving mice appear normal and live for around 2 years (PubMed:10921895). Increased production of TNF in macrophages after stimulation with lipopolysaccharides (LPS) (PubMed:10921895). Increased susceptibility to LPS-induced endotoxic shock (PubMed:10921895).</text>
</comment>
<reference key="1">
    <citation type="journal article" date="1996" name="J. Immunol.">
        <title>Expression of the CTL-associated protein TIA-1 during murine embryogenesis.</title>
        <authorList>
            <person name="Lowin B."/>
            <person name="French L."/>
            <person name="Martinou J.-C."/>
            <person name="Tschopp J."/>
        </authorList>
    </citation>
    <scope>NUCLEOTIDE SEQUENCE [MRNA]</scope>
    <source>
        <tissue>Blood</tissue>
    </source>
</reference>
<reference key="2">
    <citation type="journal article" date="1996" name="Nucleic Acids Res.">
        <title>Structure, tissue distribution and genomic organization of the murine RRM-type RNA binding proteins TIA-1 and TIAR.</title>
        <authorList>
            <person name="Beck A.R.P."/>
            <person name="Medley O.G."/>
            <person name="O'Brien S."/>
            <person name="Anderson P."/>
            <person name="Streuli M."/>
        </authorList>
    </citation>
    <scope>NUCLEOTIDE SEQUENCE [MRNA]</scope>
</reference>
<reference key="3">
    <citation type="journal article" date="2010" name="Cell">
        <title>A tissue-specific atlas of mouse protein phosphorylation and expression.</title>
        <authorList>
            <person name="Huttlin E.L."/>
            <person name="Jedrychowski M.P."/>
            <person name="Elias J.E."/>
            <person name="Goswami T."/>
            <person name="Rad R."/>
            <person name="Beausoleil S.A."/>
            <person name="Villen J."/>
            <person name="Haas W."/>
            <person name="Sowa M.E."/>
            <person name="Gygi S.P."/>
        </authorList>
    </citation>
    <scope>IDENTIFICATION BY MASS SPECTROMETRY [LARGE SCALE ANALYSIS]</scope>
    <source>
        <tissue>Spleen</tissue>
    </source>
</reference>
<reference key="4">
    <citation type="journal article" date="2000" name="EMBO J.">
        <title>TIA-1 is a translational silencer that selectively regulates the expression of TNF-alpha.</title>
        <authorList>
            <person name="Piecyk M."/>
            <person name="Wax S."/>
            <person name="Beck A.R."/>
            <person name="Kedersha N."/>
            <person name="Gupta M."/>
            <person name="Maritim B."/>
            <person name="Chen S."/>
            <person name="Gueydan C."/>
            <person name="Kruys V."/>
            <person name="Streuli M."/>
            <person name="Anderson P."/>
        </authorList>
    </citation>
    <scope>FUNCTION</scope>
    <scope>DISRUPTION PHENOTYPE</scope>
</reference>
<reference key="5">
    <citation type="journal article" date="2000" name="Mol. Cell. Biol.">
        <title>The RNA-binding protein TIA-1 is a novel mammalian splicing regulator acting through intron sequences adjacent to a 5' splice site.</title>
        <authorList>
            <person name="Del Gatto-Konczak F."/>
            <person name="Bourgeois C.F."/>
            <person name="Le Guiner C."/>
            <person name="Kister L."/>
            <person name="Gesnel M.C."/>
            <person name="Stevenin J."/>
            <person name="Breathnach R."/>
        </authorList>
    </citation>
    <scope>FUNCTION</scope>
</reference>
<reference key="6">
    <citation type="journal article" date="2001" name="J. Biol. Chem.">
        <title>TIA-1 and TIAR activate splicing of alternative exons with weak 5' splice sites followed by a U-rich stretch on their own pre-mRNAs.</title>
        <authorList>
            <person name="Le Guiner C."/>
            <person name="Lejeune F."/>
            <person name="Galiana D."/>
            <person name="Kister L."/>
            <person name="Breathnach R."/>
            <person name="Stevenin J."/>
            <person name="Del Gatto-Konczak F."/>
        </authorList>
    </citation>
    <scope>FUNCTION</scope>
</reference>
<reference key="7">
    <citation type="journal article" date="2005" name="J. Cell Sci.">
        <title>Identification of the sequence determinants mediating the nucleo-cytoplasmic shuttling of TIAR and TIA-1 RNA-binding proteins.</title>
        <authorList>
            <person name="Zhang T."/>
            <person name="Delestienne N."/>
            <person name="Huez G."/>
            <person name="Kruys V."/>
            <person name="Gueydan C."/>
        </authorList>
    </citation>
    <scope>SUBCELLULAR LOCATION</scope>
    <scope>DOMAIN</scope>
</reference>
<reference key="8">
    <citation type="journal article" date="2005" name="Mol. Cell. Biol.">
        <title>Identification and functional outcome of mRNAs associated with RNA-binding protein TIA-1.</title>
        <authorList>
            <person name="Lopez de Silanes I."/>
            <person name="Galban S."/>
            <person name="Martindale J.L."/>
            <person name="Yang X."/>
            <person name="Mazan-Mamczarz K."/>
            <person name="Indig F.E."/>
            <person name="Falco G."/>
            <person name="Zhan M."/>
            <person name="Gorospe M."/>
        </authorList>
    </citation>
    <scope>FUNCTION</scope>
</reference>
<reference key="9">
    <citation type="journal article" date="2018" name="Cell Rep.">
        <title>TIA-1 Self-Multimerization, Phase Separation, and Recruitment into Stress Granules Are Dynamically Regulated by Zn2.</title>
        <authorList>
            <person name="Rayman J.B."/>
            <person name="Karl K.A."/>
            <person name="Kandel E.R."/>
        </authorList>
    </citation>
    <scope>SUBUNIT</scope>
    <scope>SUBCELLULAR LOCATION</scope>
</reference>
<reference key="10">
    <citation type="submission" date="2006-09" db="PDB data bank">
        <title>Solution structure of the RNA binding domain in cytotoxic granule-associated RNA binding protein 1.</title>
        <authorList>
            <consortium name="RIKEN structural genomics initiative (RSGI)"/>
        </authorList>
    </citation>
    <scope>STRUCTURE BY NMR OF 104-199</scope>
</reference>
<reference key="11">
    <citation type="journal article" date="2008" name="Biochemistry">
        <title>Solution structure of the second RNA recognition motif (RRM) domain of murine T cell intracellular antigen-1 (TIA-1) and its RNA recognition mode.</title>
        <authorList>
            <person name="Kuwasako K."/>
            <person name="Takahashi M."/>
            <person name="Tochio N."/>
            <person name="Abe C."/>
            <person name="Tsuda K."/>
            <person name="Inoue M."/>
            <person name="Terada T."/>
            <person name="Shirouzu M."/>
            <person name="Kobayashi N."/>
            <person name="Kigawa T."/>
            <person name="Taguchi S."/>
            <person name="Tanaka A."/>
            <person name="Hayashizaki Y."/>
            <person name="Guntert P."/>
            <person name="Muto Y."/>
            <person name="Yokoyama S."/>
        </authorList>
    </citation>
    <scope>STRUCTURE BY NMR OF 105-199</scope>
</reference>
<proteinExistence type="evidence at protein level"/>
<sequence>MEDEMPKTLYVGNLSRDVTEALILQLFSQIGPCKNCKMIMDTAGNDPYCFVEFHEHRHAAAALAAMNGRKIMGKEVKVNWATTPSSQKKDTSSSTVVSTQRSQDHFHVFVGDLSPEITTEDIKAAFAPFGRISDARVVKDMATGKSKGYGFVSFFNKWDAENAIQQMGGQWLGGRQIRTNWATRKPPAPKSTYESNTKQLSYDEVVSQSSPNNCTVYCGGVTSGLTEQLMRQTFSPFGQIMEIRVFPDKGYSFVRFSSHESAAHAIVSVNGTTIEGHVVKCYWGKETLDMINPVQQQNQIGYPPTYGQWGQWYGNAQQIGQYVPNGWQVPAYGVYGQPWSQQGFNQTQSSAPWMGPNYSVPPPQGQNGSMLPSQPAGYRVAGYETQ</sequence>
<feature type="chain" id="PRO_0000081977" description="Cytotoxic granule associated RNA binding protein TIA1">
    <location>
        <begin position="1"/>
        <end position="386"/>
    </location>
</feature>
<feature type="domain" description="RRM 1" evidence="2">
    <location>
        <begin position="7"/>
        <end position="83"/>
    </location>
</feature>
<feature type="domain" description="RRM 2" evidence="2">
    <location>
        <begin position="106"/>
        <end position="184"/>
    </location>
</feature>
<feature type="domain" description="RRM 3" evidence="2">
    <location>
        <begin position="214"/>
        <end position="286"/>
    </location>
</feature>
<feature type="region of interest" description="Disordered" evidence="3">
    <location>
        <begin position="355"/>
        <end position="376"/>
    </location>
</feature>
<feature type="modified residue" description="N-acetylmethionine" evidence="1">
    <location>
        <position position="1"/>
    </location>
</feature>
<feature type="strand" evidence="12">
    <location>
        <begin position="106"/>
        <end position="112"/>
    </location>
</feature>
<feature type="helix" evidence="12">
    <location>
        <begin position="119"/>
        <end position="126"/>
    </location>
</feature>
<feature type="helix" evidence="12">
    <location>
        <begin position="127"/>
        <end position="129"/>
    </location>
</feature>
<feature type="strand" evidence="12">
    <location>
        <begin position="132"/>
        <end position="139"/>
    </location>
</feature>
<feature type="turn" evidence="12">
    <location>
        <begin position="141"/>
        <end position="143"/>
    </location>
</feature>
<feature type="strand" evidence="12">
    <location>
        <begin position="146"/>
        <end position="156"/>
    </location>
</feature>
<feature type="helix" evidence="12">
    <location>
        <begin position="157"/>
        <end position="166"/>
    </location>
</feature>
<feature type="turn" evidence="12">
    <location>
        <begin position="167"/>
        <end position="169"/>
    </location>
</feature>
<feature type="strand" evidence="12">
    <location>
        <begin position="178"/>
        <end position="183"/>
    </location>
</feature>
<accession>P52912</accession>
<evidence type="ECO:0000250" key="1">
    <source>
        <dbReference type="UniProtKB" id="P31483"/>
    </source>
</evidence>
<evidence type="ECO:0000255" key="2">
    <source>
        <dbReference type="PROSITE-ProRule" id="PRU00176"/>
    </source>
</evidence>
<evidence type="ECO:0000256" key="3">
    <source>
        <dbReference type="SAM" id="MobiDB-lite"/>
    </source>
</evidence>
<evidence type="ECO:0000269" key="4">
    <source>
    </source>
</evidence>
<evidence type="ECO:0000269" key="5">
    <source>
    </source>
</evidence>
<evidence type="ECO:0000269" key="6">
    <source>
    </source>
</evidence>
<evidence type="ECO:0000269" key="7">
    <source>
    </source>
</evidence>
<evidence type="ECO:0000269" key="8">
    <source>
    </source>
</evidence>
<evidence type="ECO:0000269" key="9">
    <source>
    </source>
</evidence>
<evidence type="ECO:0000305" key="10"/>
<evidence type="ECO:0000312" key="11">
    <source>
        <dbReference type="MGI" id="MGI:107914"/>
    </source>
</evidence>
<evidence type="ECO:0007829" key="12">
    <source>
        <dbReference type="PDB" id="2DGO"/>
    </source>
</evidence>